<reference evidence="10" key="1">
    <citation type="journal article" date="2004" name="Eur. J. Immunol.">
        <title>Comparative genomics of the Mill family: a rapidly evolving MHC class I gene family.</title>
        <authorList>
            <person name="Watanabe Y."/>
            <person name="Maruoka T."/>
            <person name="Walter L."/>
            <person name="Kasahara M."/>
        </authorList>
    </citation>
    <scope>NUCLEOTIDE SEQUENCE [MRNA]</scope>
    <scope>TISSUE SPECIFICITY</scope>
    <scope>DEVELOPMENTAL STAGE</scope>
    <source>
        <strain evidence="10">Brown Norway/SsN</strain>
        <tissue evidence="10">Heart</tissue>
    </source>
</reference>
<reference evidence="11" key="2">
    <citation type="journal article" date="2004" name="Nature">
        <title>Genome sequence of the Brown Norway rat yields insights into mammalian evolution.</title>
        <authorList>
            <person name="Gibbs R.A."/>
            <person name="Weinstock G.M."/>
            <person name="Metzker M.L."/>
            <person name="Muzny D.M."/>
            <person name="Sodergren E.J."/>
            <person name="Scherer S."/>
            <person name="Scott G."/>
            <person name="Steffen D."/>
            <person name="Worley K.C."/>
            <person name="Burch P.E."/>
            <person name="Okwuonu G."/>
            <person name="Hines S."/>
            <person name="Lewis L."/>
            <person name="Deramo C."/>
            <person name="Delgado O."/>
            <person name="Dugan-Rocha S."/>
            <person name="Miner G."/>
            <person name="Morgan M."/>
            <person name="Hawes A."/>
            <person name="Gill R."/>
            <person name="Holt R.A."/>
            <person name="Adams M.D."/>
            <person name="Amanatides P.G."/>
            <person name="Baden-Tillson H."/>
            <person name="Barnstead M."/>
            <person name="Chin S."/>
            <person name="Evans C.A."/>
            <person name="Ferriera S."/>
            <person name="Fosler C."/>
            <person name="Glodek A."/>
            <person name="Gu Z."/>
            <person name="Jennings D."/>
            <person name="Kraft C.L."/>
            <person name="Nguyen T."/>
            <person name="Pfannkoch C.M."/>
            <person name="Sitter C."/>
            <person name="Sutton G.G."/>
            <person name="Venter J.C."/>
            <person name="Woodage T."/>
            <person name="Smith D."/>
            <person name="Lee H.-M."/>
            <person name="Gustafson E."/>
            <person name="Cahill P."/>
            <person name="Kana A."/>
            <person name="Doucette-Stamm L."/>
            <person name="Weinstock K."/>
            <person name="Fechtel K."/>
            <person name="Weiss R.B."/>
            <person name="Dunn D.M."/>
            <person name="Green E.D."/>
            <person name="Blakesley R.W."/>
            <person name="Bouffard G.G."/>
            <person name="De Jong P.J."/>
            <person name="Osoegawa K."/>
            <person name="Zhu B."/>
            <person name="Marra M."/>
            <person name="Schein J."/>
            <person name="Bosdet I."/>
            <person name="Fjell C."/>
            <person name="Jones S."/>
            <person name="Krzywinski M."/>
            <person name="Mathewson C."/>
            <person name="Siddiqui A."/>
            <person name="Wye N."/>
            <person name="McPherson J."/>
            <person name="Zhao S."/>
            <person name="Fraser C.M."/>
            <person name="Shetty J."/>
            <person name="Shatsman S."/>
            <person name="Geer K."/>
            <person name="Chen Y."/>
            <person name="Abramzon S."/>
            <person name="Nierman W.C."/>
            <person name="Havlak P.H."/>
            <person name="Chen R."/>
            <person name="Durbin K.J."/>
            <person name="Egan A."/>
            <person name="Ren Y."/>
            <person name="Song X.-Z."/>
            <person name="Li B."/>
            <person name="Liu Y."/>
            <person name="Qin X."/>
            <person name="Cawley S."/>
            <person name="Cooney A.J."/>
            <person name="D'Souza L.M."/>
            <person name="Martin K."/>
            <person name="Wu J.Q."/>
            <person name="Gonzalez-Garay M.L."/>
            <person name="Jackson A.R."/>
            <person name="Kalafus K.J."/>
            <person name="McLeod M.P."/>
            <person name="Milosavljevic A."/>
            <person name="Virk D."/>
            <person name="Volkov A."/>
            <person name="Wheeler D.A."/>
            <person name="Zhang Z."/>
            <person name="Bailey J.A."/>
            <person name="Eichler E.E."/>
            <person name="Tuzun E."/>
            <person name="Birney E."/>
            <person name="Mongin E."/>
            <person name="Ureta-Vidal A."/>
            <person name="Woodwark C."/>
            <person name="Zdobnov E."/>
            <person name="Bork P."/>
            <person name="Suyama M."/>
            <person name="Torrents D."/>
            <person name="Alexandersson M."/>
            <person name="Trask B.J."/>
            <person name="Young J.M."/>
            <person name="Huang H."/>
            <person name="Wang H."/>
            <person name="Xing H."/>
            <person name="Daniels S."/>
            <person name="Gietzen D."/>
            <person name="Schmidt J."/>
            <person name="Stevens K."/>
            <person name="Vitt U."/>
            <person name="Wingrove J."/>
            <person name="Camara F."/>
            <person name="Mar Alba M."/>
            <person name="Abril J.F."/>
            <person name="Guigo R."/>
            <person name="Smit A."/>
            <person name="Dubchak I."/>
            <person name="Rubin E.M."/>
            <person name="Couronne O."/>
            <person name="Poliakov A."/>
            <person name="Huebner N."/>
            <person name="Ganten D."/>
            <person name="Goesele C."/>
            <person name="Hummel O."/>
            <person name="Kreitler T."/>
            <person name="Lee Y.-A."/>
            <person name="Monti J."/>
            <person name="Schulz H."/>
            <person name="Zimdahl H."/>
            <person name="Himmelbauer H."/>
            <person name="Lehrach H."/>
            <person name="Jacob H.J."/>
            <person name="Bromberg S."/>
            <person name="Gullings-Handley J."/>
            <person name="Jensen-Seaman M.I."/>
            <person name="Kwitek A.E."/>
            <person name="Lazar J."/>
            <person name="Pasko D."/>
            <person name="Tonellato P.J."/>
            <person name="Twigger S."/>
            <person name="Ponting C.P."/>
            <person name="Duarte J.M."/>
            <person name="Rice S."/>
            <person name="Goodstadt L."/>
            <person name="Beatson S.A."/>
            <person name="Emes R.D."/>
            <person name="Winter E.E."/>
            <person name="Webber C."/>
            <person name="Brandt P."/>
            <person name="Nyakatura G."/>
            <person name="Adetobi M."/>
            <person name="Chiaromonte F."/>
            <person name="Elnitski L."/>
            <person name="Eswara P."/>
            <person name="Hardison R.C."/>
            <person name="Hou M."/>
            <person name="Kolbe D."/>
            <person name="Makova K."/>
            <person name="Miller W."/>
            <person name="Nekrutenko A."/>
            <person name="Riemer C."/>
            <person name="Schwartz S."/>
            <person name="Taylor J."/>
            <person name="Yang S."/>
            <person name="Zhang Y."/>
            <person name="Lindpaintner K."/>
            <person name="Andrews T.D."/>
            <person name="Caccamo M."/>
            <person name="Clamp M."/>
            <person name="Clarke L."/>
            <person name="Curwen V."/>
            <person name="Durbin R.M."/>
            <person name="Eyras E."/>
            <person name="Searle S.M."/>
            <person name="Cooper G.M."/>
            <person name="Batzoglou S."/>
            <person name="Brudno M."/>
            <person name="Sidow A."/>
            <person name="Stone E.A."/>
            <person name="Payseur B.A."/>
            <person name="Bourque G."/>
            <person name="Lopez-Otin C."/>
            <person name="Puente X.S."/>
            <person name="Chakrabarti K."/>
            <person name="Chatterji S."/>
            <person name="Dewey C."/>
            <person name="Pachter L."/>
            <person name="Bray N."/>
            <person name="Yap V.B."/>
            <person name="Caspi A."/>
            <person name="Tesler G."/>
            <person name="Pevzner P.A."/>
            <person name="Haussler D."/>
            <person name="Roskin K.M."/>
            <person name="Baertsch R."/>
            <person name="Clawson H."/>
            <person name="Furey T.S."/>
            <person name="Hinrichs A.S."/>
            <person name="Karolchik D."/>
            <person name="Kent W.J."/>
            <person name="Rosenbloom K.R."/>
            <person name="Trumbower H."/>
            <person name="Weirauch M."/>
            <person name="Cooper D.N."/>
            <person name="Stenson P.D."/>
            <person name="Ma B."/>
            <person name="Brent M."/>
            <person name="Arumugam M."/>
            <person name="Shteynberg D."/>
            <person name="Copley R.R."/>
            <person name="Taylor M.S."/>
            <person name="Riethman H."/>
            <person name="Mudunuri U."/>
            <person name="Peterson J."/>
            <person name="Guyer M."/>
            <person name="Felsenfeld A."/>
            <person name="Old S."/>
            <person name="Mockrin S."/>
            <person name="Collins F.S."/>
        </authorList>
    </citation>
    <scope>NUCLEOTIDE SEQUENCE [LARGE SCALE GENOMIC DNA]</scope>
    <source>
        <strain evidence="11">Brown Norway</strain>
    </source>
</reference>
<dbReference type="EMBL" id="AB113962">
    <property type="protein sequence ID" value="BAD54762.1"/>
    <property type="molecule type" value="mRNA"/>
</dbReference>
<dbReference type="EMBL" id="AC093995">
    <property type="status" value="NOT_ANNOTATED_CDS"/>
    <property type="molecule type" value="Genomic_DNA"/>
</dbReference>
<dbReference type="RefSeq" id="NP_001011931.1">
    <property type="nucleotide sequence ID" value="NM_001011931.4"/>
</dbReference>
<dbReference type="RefSeq" id="XP_008757128.1">
    <property type="nucleotide sequence ID" value="XM_008758906.2"/>
</dbReference>
<dbReference type="RefSeq" id="XP_008757129.1">
    <property type="nucleotide sequence ID" value="XM_008758907.2"/>
</dbReference>
<dbReference type="RefSeq" id="XP_063139181.1">
    <property type="nucleotide sequence ID" value="XM_063283111.1"/>
</dbReference>
<dbReference type="SMR" id="Q60I18"/>
<dbReference type="FunCoup" id="Q60I18">
    <property type="interactions" value="64"/>
</dbReference>
<dbReference type="STRING" id="10116.ENSRNOP00000033032"/>
<dbReference type="GlyCosmos" id="Q60I18">
    <property type="glycosylation" value="4 sites, No reported glycans"/>
</dbReference>
<dbReference type="GlyGen" id="Q60I18">
    <property type="glycosylation" value="4 sites"/>
</dbReference>
<dbReference type="PaxDb" id="10116-ENSRNOP00000033032"/>
<dbReference type="Ensembl" id="ENSRNOT00000035286.6">
    <property type="protein sequence ID" value="ENSRNOP00000033032.3"/>
    <property type="gene ID" value="ENSRNOG00000017699.8"/>
</dbReference>
<dbReference type="GeneID" id="292671"/>
<dbReference type="KEGG" id="rno:292671"/>
<dbReference type="AGR" id="RGD:1311714"/>
<dbReference type="CTD" id="266815"/>
<dbReference type="RGD" id="1311714">
    <property type="gene designation" value="Mill1"/>
</dbReference>
<dbReference type="eggNOG" id="ENOG502RU00">
    <property type="taxonomic scope" value="Eukaryota"/>
</dbReference>
<dbReference type="GeneTree" id="ENSGT01130000278293"/>
<dbReference type="InParanoid" id="Q60I18"/>
<dbReference type="OMA" id="NHNINEP"/>
<dbReference type="OrthoDB" id="9449998at2759"/>
<dbReference type="PhylomeDB" id="Q60I18"/>
<dbReference type="TreeFam" id="TF339076"/>
<dbReference type="PRO" id="PR:Q60I18"/>
<dbReference type="Proteomes" id="UP000002494">
    <property type="component" value="Chromosome 1"/>
</dbReference>
<dbReference type="Bgee" id="ENSRNOG00000017699">
    <property type="expression patterns" value="Expressed in ovary and 12 other cell types or tissues"/>
</dbReference>
<dbReference type="GO" id="GO:0009986">
    <property type="term" value="C:cell surface"/>
    <property type="evidence" value="ECO:0000266"/>
    <property type="project" value="RGD"/>
</dbReference>
<dbReference type="GO" id="GO:0009897">
    <property type="term" value="C:external side of plasma membrane"/>
    <property type="evidence" value="ECO:0000318"/>
    <property type="project" value="GO_Central"/>
</dbReference>
<dbReference type="GO" id="GO:0005615">
    <property type="term" value="C:extracellular space"/>
    <property type="evidence" value="ECO:0000266"/>
    <property type="project" value="RGD"/>
</dbReference>
<dbReference type="GO" id="GO:0005886">
    <property type="term" value="C:plasma membrane"/>
    <property type="evidence" value="ECO:0000266"/>
    <property type="project" value="RGD"/>
</dbReference>
<dbReference type="GO" id="GO:0046703">
    <property type="term" value="F:natural killer cell lectin-like receptor binding"/>
    <property type="evidence" value="ECO:0000266"/>
    <property type="project" value="RGD"/>
</dbReference>
<dbReference type="GO" id="GO:0048018">
    <property type="term" value="F:receptor ligand activity"/>
    <property type="evidence" value="ECO:0000266"/>
    <property type="project" value="RGD"/>
</dbReference>
<dbReference type="GO" id="GO:0042742">
    <property type="term" value="P:defense response to bacterium"/>
    <property type="evidence" value="ECO:0000266"/>
    <property type="project" value="RGD"/>
</dbReference>
<dbReference type="GO" id="GO:0051607">
    <property type="term" value="P:defense response to virus"/>
    <property type="evidence" value="ECO:0000266"/>
    <property type="project" value="RGD"/>
</dbReference>
<dbReference type="GO" id="GO:0006974">
    <property type="term" value="P:DNA damage response"/>
    <property type="evidence" value="ECO:0000266"/>
    <property type="project" value="RGD"/>
</dbReference>
<dbReference type="GO" id="GO:0046629">
    <property type="term" value="P:gamma-delta T cell activation"/>
    <property type="evidence" value="ECO:0000266"/>
    <property type="project" value="RGD"/>
</dbReference>
<dbReference type="GO" id="GO:0006955">
    <property type="term" value="P:immune response"/>
    <property type="evidence" value="ECO:0000318"/>
    <property type="project" value="GO_Central"/>
</dbReference>
<dbReference type="GO" id="GO:0002418">
    <property type="term" value="P:immune response to tumor cell"/>
    <property type="evidence" value="ECO:0000266"/>
    <property type="project" value="RGD"/>
</dbReference>
<dbReference type="GO" id="GO:0042267">
    <property type="term" value="P:natural killer cell mediated cytotoxicity"/>
    <property type="evidence" value="ECO:0000266"/>
    <property type="project" value="RGD"/>
</dbReference>
<dbReference type="GO" id="GO:0032815">
    <property type="term" value="P:negative regulation of natural killer cell activation"/>
    <property type="evidence" value="ECO:0000266"/>
    <property type="project" value="RGD"/>
</dbReference>
<dbReference type="GO" id="GO:0045953">
    <property type="term" value="P:negative regulation of natural killer cell mediated cytotoxicity"/>
    <property type="evidence" value="ECO:0000266"/>
    <property type="project" value="RGD"/>
</dbReference>
<dbReference type="GO" id="GO:0009408">
    <property type="term" value="P:response to heat"/>
    <property type="evidence" value="ECO:0000266"/>
    <property type="project" value="RGD"/>
</dbReference>
<dbReference type="GO" id="GO:0001913">
    <property type="term" value="P:T cell mediated cytotoxicity"/>
    <property type="evidence" value="ECO:0000266"/>
    <property type="project" value="RGD"/>
</dbReference>
<dbReference type="FunFam" id="3.30.500.10:FF:000003">
    <property type="entry name" value="IgG receptor FcRn large subunit p51"/>
    <property type="match status" value="1"/>
</dbReference>
<dbReference type="FunFam" id="2.60.40.10:FF:000204">
    <property type="entry name" value="Major histocompatibility complex, class I-related protein"/>
    <property type="match status" value="1"/>
</dbReference>
<dbReference type="Gene3D" id="2.60.40.10">
    <property type="entry name" value="Immunoglobulins"/>
    <property type="match status" value="1"/>
</dbReference>
<dbReference type="Gene3D" id="3.30.500.10">
    <property type="entry name" value="MHC class I-like antigen recognition-like"/>
    <property type="match status" value="1"/>
</dbReference>
<dbReference type="InterPro" id="IPR007110">
    <property type="entry name" value="Ig-like_dom"/>
</dbReference>
<dbReference type="InterPro" id="IPR036179">
    <property type="entry name" value="Ig-like_dom_sf"/>
</dbReference>
<dbReference type="InterPro" id="IPR013783">
    <property type="entry name" value="Ig-like_fold"/>
</dbReference>
<dbReference type="InterPro" id="IPR003597">
    <property type="entry name" value="Ig_C1-set"/>
</dbReference>
<dbReference type="InterPro" id="IPR050208">
    <property type="entry name" value="MHC_class-I_related"/>
</dbReference>
<dbReference type="InterPro" id="IPR011161">
    <property type="entry name" value="MHC_I-like_Ag-recog"/>
</dbReference>
<dbReference type="InterPro" id="IPR037055">
    <property type="entry name" value="MHC_I-like_Ag-recog_sf"/>
</dbReference>
<dbReference type="InterPro" id="IPR011162">
    <property type="entry name" value="MHC_I/II-like_Ag-recog"/>
</dbReference>
<dbReference type="InterPro" id="IPR001039">
    <property type="entry name" value="MHC_I_a_a1/a2"/>
</dbReference>
<dbReference type="PANTHER" id="PTHR16675:SF139">
    <property type="entry name" value="MHC CLASS I-LIKE PROTEIN MILL1"/>
    <property type="match status" value="1"/>
</dbReference>
<dbReference type="PANTHER" id="PTHR16675">
    <property type="entry name" value="MHC CLASS I-RELATED"/>
    <property type="match status" value="1"/>
</dbReference>
<dbReference type="Pfam" id="PF00129">
    <property type="entry name" value="MHC_I"/>
    <property type="match status" value="1"/>
</dbReference>
<dbReference type="PRINTS" id="PR01638">
    <property type="entry name" value="MHCCLASSI"/>
</dbReference>
<dbReference type="SMART" id="SM00407">
    <property type="entry name" value="IGc1"/>
    <property type="match status" value="1"/>
</dbReference>
<dbReference type="SUPFAM" id="SSF48726">
    <property type="entry name" value="Immunoglobulin"/>
    <property type="match status" value="1"/>
</dbReference>
<dbReference type="SUPFAM" id="SSF54452">
    <property type="entry name" value="MHC antigen-recognition domain"/>
    <property type="match status" value="1"/>
</dbReference>
<dbReference type="PROSITE" id="PS50835">
    <property type="entry name" value="IG_LIKE"/>
    <property type="match status" value="1"/>
</dbReference>
<protein>
    <recommendedName>
        <fullName evidence="7">MHC class I-like protein MILL1</fullName>
    </recommendedName>
    <alternativeName>
        <fullName evidence="7">MHC class I-like located near the leukocyte receptor complex 1</fullName>
    </alternativeName>
</protein>
<proteinExistence type="evidence at transcript level"/>
<comment type="subunit">
    <text evidence="2">Heterodimer with B2M.</text>
</comment>
<comment type="subcellular location">
    <subcellularLocation>
        <location evidence="2">Cell membrane</location>
        <topology evidence="2">Lipid-anchor</topology>
        <topology evidence="2">GPI-anchor</topology>
    </subcellularLocation>
</comment>
<comment type="tissue specificity">
    <text evidence="6">Detected in skin, esophagus, tongue, skin, muscle, uterus, ovary, testis and epididymis.</text>
</comment>
<comment type="developmental stage">
    <text evidence="6">In neonatal animals, highly expressed in skin.</text>
</comment>
<comment type="similarity">
    <text evidence="5">Belongs to the MHC class I family.</text>
</comment>
<comment type="caution">
    <text evidence="9">Lacks key residues involved in peptide docking, suggesting that this is a non-classical MHC class I protein which does not play a role in antigen presentation.</text>
</comment>
<feature type="signal peptide" evidence="3">
    <location>
        <begin position="1"/>
        <end position="30"/>
    </location>
</feature>
<feature type="chain" id="PRO_5014106077" description="MHC class I-like protein MILL1" evidence="8">
    <location>
        <begin position="31"/>
        <end position="374"/>
    </location>
</feature>
<feature type="propeptide" id="PRO_0000452206" description="Removed in mature form" evidence="8">
    <location>
        <begin position="375"/>
        <end position="404"/>
    </location>
</feature>
<feature type="domain" description="Ig-like C1-type" evidence="4">
    <location>
        <begin position="224"/>
        <end position="338"/>
    </location>
</feature>
<feature type="region of interest" description="Alpha-1" evidence="3">
    <location>
        <begin position="59"/>
        <end position="150"/>
    </location>
</feature>
<feature type="region of interest" description="Alpha-2" evidence="3">
    <location>
        <begin position="151"/>
        <end position="242"/>
    </location>
</feature>
<feature type="region of interest" description="Alpha-3" evidence="3">
    <location>
        <begin position="243"/>
        <end position="342"/>
    </location>
</feature>
<feature type="region of interest" description="Connecting peptide" evidence="3">
    <location>
        <begin position="343"/>
        <end position="373"/>
    </location>
</feature>
<feature type="lipid moiety-binding region" description="GPI-anchor amidated serine" evidence="2">
    <location>
        <position position="374"/>
    </location>
</feature>
<feature type="glycosylation site" description="N-linked (GlcNAc...) asparagine" evidence="3">
    <location>
        <position position="98"/>
    </location>
</feature>
<feature type="glycosylation site" description="N-linked (GlcNAc...) asparagine" evidence="3">
    <location>
        <position position="102"/>
    </location>
</feature>
<feature type="glycosylation site" description="N-linked (GlcNAc...) asparagine" evidence="3">
    <location>
        <position position="165"/>
    </location>
</feature>
<feature type="glycosylation site" description="N-linked (GlcNAc...) asparagine" evidence="3">
    <location>
        <position position="323"/>
    </location>
</feature>
<feature type="disulfide bond" evidence="1">
    <location>
        <begin position="160"/>
        <end position="223"/>
    </location>
</feature>
<feature type="disulfide bond" evidence="4">
    <location>
        <begin position="262"/>
        <end position="322"/>
    </location>
</feature>
<keyword id="KW-1003">Cell membrane</keyword>
<keyword id="KW-1015">Disulfide bond</keyword>
<keyword id="KW-0325">Glycoprotein</keyword>
<keyword id="KW-0336">GPI-anchor</keyword>
<keyword id="KW-0449">Lipoprotein</keyword>
<keyword id="KW-0472">Membrane</keyword>
<keyword id="KW-1185">Reference proteome</keyword>
<keyword id="KW-0732">Signal</keyword>
<name>MILL1_RAT</name>
<gene>
    <name evidence="7 12" type="primary">Mill1</name>
</gene>
<accession>Q60I18</accession>
<sequence>MMLSRDLRAEAAVRLWIMFLLLEDLLGACAVGDYQRRVPSAPNTDIRNTLEKPRVTTQEVAGPHTLRYDLMALSLKLPELPQVLIWRYFDDEPFLHYNESSNRTDSWEPRIKRHWRAMTWARETEDLQEMVEQLKRMLAEVTGQKGQDKGLHILQATLGCELQRNGSTRGFWHLGYDGRNLLTFDQKTLTWTMDMPFTQQKKTFWEPRAPRADLVKTFLDDTCPAQLQRHLASLRSEPLDTGSPMVIVTFRNYPLGRVTLTCRAFNLYPHMATRGTLAWLQDRKLVKQKAFEPGTILPSGDRTYQIWVSIWVLPGQEPQFTCNLSYHGGNIEKRAVIVNTVSGEKTRQPSTSGVGGRVKKSLWTTMTTAFMVTSWTRKTGGDSTLLLLWWLLFFSTVLAVLTLV</sequence>
<organism evidence="10">
    <name type="scientific">Rattus norvegicus</name>
    <name type="common">Rat</name>
    <dbReference type="NCBI Taxonomy" id="10116"/>
    <lineage>
        <taxon>Eukaryota</taxon>
        <taxon>Metazoa</taxon>
        <taxon>Chordata</taxon>
        <taxon>Craniata</taxon>
        <taxon>Vertebrata</taxon>
        <taxon>Euteleostomi</taxon>
        <taxon>Mammalia</taxon>
        <taxon>Eutheria</taxon>
        <taxon>Euarchontoglires</taxon>
        <taxon>Glires</taxon>
        <taxon>Rodentia</taxon>
        <taxon>Myomorpha</taxon>
        <taxon>Muroidea</taxon>
        <taxon>Muridae</taxon>
        <taxon>Murinae</taxon>
        <taxon>Rattus</taxon>
    </lineage>
</organism>
<evidence type="ECO:0000250" key="1">
    <source>
        <dbReference type="UniProtKB" id="Q8HWE5"/>
    </source>
</evidence>
<evidence type="ECO:0000250" key="2">
    <source>
        <dbReference type="UniProtKB" id="Q8HWE7"/>
    </source>
</evidence>
<evidence type="ECO:0000255" key="3"/>
<evidence type="ECO:0000255" key="4">
    <source>
        <dbReference type="PROSITE-ProRule" id="PRU00114"/>
    </source>
</evidence>
<evidence type="ECO:0000255" key="5">
    <source>
        <dbReference type="RuleBase" id="RU004439"/>
    </source>
</evidence>
<evidence type="ECO:0000269" key="6">
    <source>
    </source>
</evidence>
<evidence type="ECO:0000303" key="7">
    <source>
    </source>
</evidence>
<evidence type="ECO:0000305" key="8"/>
<evidence type="ECO:0000305" key="9">
    <source>
    </source>
</evidence>
<evidence type="ECO:0000312" key="10">
    <source>
        <dbReference type="EMBL" id="BAD54762.1"/>
    </source>
</evidence>
<evidence type="ECO:0000312" key="11">
    <source>
        <dbReference type="Proteomes" id="UP000002494"/>
    </source>
</evidence>
<evidence type="ECO:0000312" key="12">
    <source>
        <dbReference type="RGD" id="1311714"/>
    </source>
</evidence>